<feature type="chain" id="PRO_0000131415" description="Large ribosomal subunit protein uL18">
    <location>
        <begin position="1"/>
        <end position="203"/>
    </location>
</feature>
<comment type="function">
    <text evidence="1">This is one of the proteins that bind and probably mediate the attachment of the 5S RNA into the large ribosomal subunit, where it forms part of the central protuberance.</text>
</comment>
<comment type="subunit">
    <text evidence="1">Part of the 50S ribosomal subunit. Contacts the 5S and 23S rRNAs.</text>
</comment>
<comment type="similarity">
    <text evidence="1">Belongs to the universal ribosomal protein uL18 family.</text>
</comment>
<comment type="sequence caution" evidence="2">
    <conflict type="erroneous initiation">
        <sequence resource="EMBL-CDS" id="BAA30872"/>
    </conflict>
    <text>Extended N-terminus.</text>
</comment>
<protein>
    <recommendedName>
        <fullName evidence="1">Large ribosomal subunit protein uL18</fullName>
    </recommendedName>
    <alternativeName>
        <fullName evidence="2">50S ribosomal protein L18</fullName>
    </alternativeName>
</protein>
<reference key="1">
    <citation type="journal article" date="1998" name="DNA Res.">
        <title>Complete sequence and gene organization of the genome of a hyper-thermophilic archaebacterium, Pyrococcus horikoshii OT3.</title>
        <authorList>
            <person name="Kawarabayasi Y."/>
            <person name="Sawada M."/>
            <person name="Horikawa H."/>
            <person name="Haikawa Y."/>
            <person name="Hino Y."/>
            <person name="Yamamoto S."/>
            <person name="Sekine M."/>
            <person name="Baba S."/>
            <person name="Kosugi H."/>
            <person name="Hosoyama A."/>
            <person name="Nagai Y."/>
            <person name="Sakai M."/>
            <person name="Ogura K."/>
            <person name="Otsuka R."/>
            <person name="Nakazawa H."/>
            <person name="Takamiya M."/>
            <person name="Ohfuku Y."/>
            <person name="Funahashi T."/>
            <person name="Tanaka T."/>
            <person name="Kudoh Y."/>
            <person name="Yamazaki J."/>
            <person name="Kushida N."/>
            <person name="Oguchi A."/>
            <person name="Aoki K."/>
            <person name="Yoshizawa T."/>
            <person name="Nakamura Y."/>
            <person name="Robb F.T."/>
            <person name="Horikoshi K."/>
            <person name="Masuchi Y."/>
            <person name="Shizuya H."/>
            <person name="Kikuchi H."/>
        </authorList>
    </citation>
    <scope>NUCLEOTIDE SEQUENCE [LARGE SCALE GENOMIC DNA]</scope>
    <source>
        <strain>ATCC 700860 / DSM 12428 / JCM 9974 / NBRC 100139 / OT-3</strain>
    </source>
</reference>
<evidence type="ECO:0000255" key="1">
    <source>
        <dbReference type="HAMAP-Rule" id="MF_01337"/>
    </source>
</evidence>
<evidence type="ECO:0000305" key="2"/>
<name>RL18_PYRHO</name>
<accession>O59438</accession>
<dbReference type="EMBL" id="BA000001">
    <property type="protein sequence ID" value="BAA30872.1"/>
    <property type="status" value="ALT_INIT"/>
    <property type="molecule type" value="Genomic_DNA"/>
</dbReference>
<dbReference type="PIR" id="A71185">
    <property type="entry name" value="A71185"/>
</dbReference>
<dbReference type="RefSeq" id="WP_010885822.1">
    <property type="nucleotide sequence ID" value="NC_000961.1"/>
</dbReference>
<dbReference type="SMR" id="O59438"/>
<dbReference type="STRING" id="70601.gene:9378755"/>
<dbReference type="EnsemblBacteria" id="BAA30872">
    <property type="protein sequence ID" value="BAA30872"/>
    <property type="gene ID" value="BAA30872"/>
</dbReference>
<dbReference type="GeneID" id="1442603"/>
<dbReference type="KEGG" id="pho:PH1758"/>
<dbReference type="eggNOG" id="arCOG04088">
    <property type="taxonomic scope" value="Archaea"/>
</dbReference>
<dbReference type="OrthoDB" id="8644at2157"/>
<dbReference type="Proteomes" id="UP000000752">
    <property type="component" value="Chromosome"/>
</dbReference>
<dbReference type="GO" id="GO:0022625">
    <property type="term" value="C:cytosolic large ribosomal subunit"/>
    <property type="evidence" value="ECO:0007669"/>
    <property type="project" value="TreeGrafter"/>
</dbReference>
<dbReference type="GO" id="GO:0008097">
    <property type="term" value="F:5S rRNA binding"/>
    <property type="evidence" value="ECO:0007669"/>
    <property type="project" value="InterPro"/>
</dbReference>
<dbReference type="GO" id="GO:0003735">
    <property type="term" value="F:structural constituent of ribosome"/>
    <property type="evidence" value="ECO:0007669"/>
    <property type="project" value="InterPro"/>
</dbReference>
<dbReference type="GO" id="GO:0000027">
    <property type="term" value="P:ribosomal large subunit assembly"/>
    <property type="evidence" value="ECO:0007669"/>
    <property type="project" value="TreeGrafter"/>
</dbReference>
<dbReference type="GO" id="GO:0006412">
    <property type="term" value="P:translation"/>
    <property type="evidence" value="ECO:0007669"/>
    <property type="project" value="UniProtKB-UniRule"/>
</dbReference>
<dbReference type="CDD" id="cd00432">
    <property type="entry name" value="Ribosomal_L18_L5e"/>
    <property type="match status" value="1"/>
</dbReference>
<dbReference type="FunFam" id="3.30.420.100:FF:000008">
    <property type="entry name" value="50S ribosomal protein L18"/>
    <property type="match status" value="1"/>
</dbReference>
<dbReference type="Gene3D" id="3.30.420.100">
    <property type="match status" value="1"/>
</dbReference>
<dbReference type="HAMAP" id="MF_01337_A">
    <property type="entry name" value="Ribosomal_uL18_A"/>
    <property type="match status" value="1"/>
</dbReference>
<dbReference type="InterPro" id="IPR005485">
    <property type="entry name" value="Rbsml_uL18_euk"/>
</dbReference>
<dbReference type="NCBIfam" id="NF006342">
    <property type="entry name" value="PRK08569.1"/>
    <property type="match status" value="1"/>
</dbReference>
<dbReference type="PANTHER" id="PTHR23410:SF12">
    <property type="entry name" value="LARGE RIBOSOMAL SUBUNIT PROTEIN UL18"/>
    <property type="match status" value="1"/>
</dbReference>
<dbReference type="PANTHER" id="PTHR23410">
    <property type="entry name" value="RIBOSOMAL PROTEIN L5-RELATED"/>
    <property type="match status" value="1"/>
</dbReference>
<dbReference type="Pfam" id="PF17144">
    <property type="entry name" value="Ribosomal_L5e"/>
    <property type="match status" value="2"/>
</dbReference>
<dbReference type="PRINTS" id="PR00058">
    <property type="entry name" value="RIBOSOMALL5"/>
</dbReference>
<dbReference type="SUPFAM" id="SSF53137">
    <property type="entry name" value="Translational machinery components"/>
    <property type="match status" value="1"/>
</dbReference>
<gene>
    <name evidence="1" type="primary">rpl18</name>
    <name type="ordered locus">PH1758</name>
    <name type="ORF">PHLG023</name>
</gene>
<proteinExistence type="inferred from homology"/>
<organism>
    <name type="scientific">Pyrococcus horikoshii (strain ATCC 700860 / DSM 12428 / JCM 9974 / NBRC 100139 / OT-3)</name>
    <dbReference type="NCBI Taxonomy" id="70601"/>
    <lineage>
        <taxon>Archaea</taxon>
        <taxon>Methanobacteriati</taxon>
        <taxon>Methanobacteriota</taxon>
        <taxon>Thermococci</taxon>
        <taxon>Thermococcales</taxon>
        <taxon>Thermococcaceae</taxon>
        <taxon>Pyrococcus</taxon>
    </lineage>
</organism>
<keyword id="KW-0687">Ribonucleoprotein</keyword>
<keyword id="KW-0689">Ribosomal protein</keyword>
<keyword id="KW-0694">RNA-binding</keyword>
<keyword id="KW-0699">rRNA-binding</keyword>
<sequence length="203" mass="23317">MAHGPRYRVPFRRRREGKTNYRKRLKLLKSGKPRLVVRKSLNHHIAQIIVYDPKGDRTLVSAHTRELIRDFGWKGHCGNTPSAYLLGLLIGYKAKKAGIEEAILDIGLHPPVRGSSIFAVLKGAIDAGLNVPHSPEIFPEDYRIRGEHIAEYARMLKEQDEDRFRRQFGGYLEKGLDPEKLPEHFEEVKARIIEKFESEGARE</sequence>